<accession>A6MMV5</accession>
<name>YCF4_ILLOL</name>
<organism>
    <name type="scientific">Illicium oligandrum</name>
    <name type="common">Star anise</name>
    <dbReference type="NCBI Taxonomy" id="145286"/>
    <lineage>
        <taxon>Eukaryota</taxon>
        <taxon>Viridiplantae</taxon>
        <taxon>Streptophyta</taxon>
        <taxon>Embryophyta</taxon>
        <taxon>Tracheophyta</taxon>
        <taxon>Spermatophyta</taxon>
        <taxon>Magnoliopsida</taxon>
        <taxon>Austrobaileyales</taxon>
        <taxon>Schisandraceae</taxon>
        <taxon>Illicium</taxon>
    </lineage>
</organism>
<protein>
    <recommendedName>
        <fullName evidence="1">Photosystem I assembly protein Ycf4</fullName>
    </recommendedName>
</protein>
<gene>
    <name evidence="1" type="primary">ycf4</name>
</gene>
<comment type="function">
    <text evidence="1">Seems to be required for the assembly of the photosystem I complex.</text>
</comment>
<comment type="subcellular location">
    <subcellularLocation>
        <location evidence="1">Plastid</location>
        <location evidence="1">Chloroplast thylakoid membrane</location>
        <topology evidence="1">Multi-pass membrane protein</topology>
    </subcellularLocation>
</comment>
<comment type="similarity">
    <text evidence="1">Belongs to the Ycf4 family.</text>
</comment>
<keyword id="KW-0150">Chloroplast</keyword>
<keyword id="KW-0472">Membrane</keyword>
<keyword id="KW-0602">Photosynthesis</keyword>
<keyword id="KW-0934">Plastid</keyword>
<keyword id="KW-0793">Thylakoid</keyword>
<keyword id="KW-0812">Transmembrane</keyword>
<keyword id="KW-1133">Transmembrane helix</keyword>
<feature type="chain" id="PRO_0000326011" description="Photosystem I assembly protein Ycf4">
    <location>
        <begin position="1"/>
        <end position="184"/>
    </location>
</feature>
<feature type="transmembrane region" description="Helical" evidence="1">
    <location>
        <begin position="22"/>
        <end position="42"/>
    </location>
</feature>
<feature type="transmembrane region" description="Helical" evidence="1">
    <location>
        <begin position="57"/>
        <end position="77"/>
    </location>
</feature>
<evidence type="ECO:0000255" key="1">
    <source>
        <dbReference type="HAMAP-Rule" id="MF_00437"/>
    </source>
</evidence>
<proteinExistence type="inferred from homology"/>
<reference key="1">
    <citation type="journal article" date="2007" name="Mol. Phylogenet. Evol.">
        <title>Phylogenetic and evolutionary implications of complete chloroplast genome sequences of four early-diverging angiosperms: Buxus (Buxaceae), Chloranthus (Chloranthaceae), Dioscorea (Dioscoreaceae), and Illicium (Schisandraceae).</title>
        <authorList>
            <person name="Hansen D.R."/>
            <person name="Dastidar S.G."/>
            <person name="Cai Z."/>
            <person name="Penaflor C."/>
            <person name="Kuehl J.V."/>
            <person name="Boore J.L."/>
            <person name="Jansen R.K."/>
        </authorList>
    </citation>
    <scope>NUCLEOTIDE SEQUENCE [LARGE SCALE GENOMIC DNA]</scope>
</reference>
<geneLocation type="chloroplast"/>
<dbReference type="EMBL" id="EF380354">
    <property type="protein sequence ID" value="ABQ52530.1"/>
    <property type="molecule type" value="Genomic_DNA"/>
</dbReference>
<dbReference type="RefSeq" id="YP_001294281.1">
    <property type="nucleotide sequence ID" value="NC_009600.1"/>
</dbReference>
<dbReference type="GeneID" id="5236791"/>
<dbReference type="GO" id="GO:0009535">
    <property type="term" value="C:chloroplast thylakoid membrane"/>
    <property type="evidence" value="ECO:0007669"/>
    <property type="project" value="UniProtKB-SubCell"/>
</dbReference>
<dbReference type="GO" id="GO:0009522">
    <property type="term" value="C:photosystem I"/>
    <property type="evidence" value="ECO:0007669"/>
    <property type="project" value="InterPro"/>
</dbReference>
<dbReference type="GO" id="GO:0015979">
    <property type="term" value="P:photosynthesis"/>
    <property type="evidence" value="ECO:0007669"/>
    <property type="project" value="UniProtKB-UniRule"/>
</dbReference>
<dbReference type="HAMAP" id="MF_00437">
    <property type="entry name" value="Ycf4"/>
    <property type="match status" value="1"/>
</dbReference>
<dbReference type="InterPro" id="IPR003359">
    <property type="entry name" value="PSI_Ycf4_assembly"/>
</dbReference>
<dbReference type="PANTHER" id="PTHR33288">
    <property type="match status" value="1"/>
</dbReference>
<dbReference type="PANTHER" id="PTHR33288:SF4">
    <property type="entry name" value="PHOTOSYSTEM I ASSEMBLY PROTEIN YCF4"/>
    <property type="match status" value="1"/>
</dbReference>
<dbReference type="Pfam" id="PF02392">
    <property type="entry name" value="Ycf4"/>
    <property type="match status" value="1"/>
</dbReference>
<sequence length="184" mass="21664">MNWRSERIWIELITGSRKTSNFCWACILFLGSIGFLLVGISSYLGRNLISLFPSQQILFFPQGIVMCFYGIAGLFISSYLWCTISWNVGSGYDRFDRKEGIVCIFRWGFPGINRRIFLRFRMRDIRSIRMKVKEGLYPRRVLYMEIRGRGDIPLTRTDENLSPLEIEQKAAEWAYFLRVPIEVF</sequence>